<comment type="function">
    <text evidence="2 3">Sensor of abasic sites in single-stranded DNA (ssDNA) required to preserve genome integrity by promoting error-free repair of abasic sites. Acts as an enzyme that recognizes and binds abasic sites in ssDNA at replication forks and chemically modifies the lesion by forming a covalent cross-link with DNA: forms a stable thiazolidine linkage between a ring-opened abasic site and the alpha-amino and sulfhydryl substituents of its N-terminal catalytic cysteine residue. Promotes error-free repair by protecting abasic sites from translesion synthesis (TLS) polymerases and endonucleases that are error-prone and would generate mutations and double-strand breaks. The HMCES DNA-protein cross-link is then either reversed or degraded. HMCES is able to catalyze the reversal of its thiazolidine cross-link and cycle between a cross-link and a non-cross-linked state depending on DNA context: mediates self-reversal of the thiazolidine cross-link in double stranded DNA, allowing APEX1 to initiate downstream repair of abasic sites. The HMCES DNA-protein cross-link can also be degraded by the SPRTN metalloprotease following unfolding by the BRIP1/FANCJ helicase. Has preference for ssDNA, but can also accommodate double-stranded DNA with 3' or 5' overhang (dsDNA), and dsDNA-ssDNA 3' junction. Plays a protective role during somatic hypermutation of immunoglobulin genes in B-cells: acts via its ability to form covalent cross-links with abasic sites, thereby limiting the accumulation of deletions in somatic hypermutation target regions (By similarity). Also involved in class switch recombination (CSR) in B-cells independently of the formation of a DNA-protein cross-link: acts by binding and protecting ssDNA overhangs to promote DNA double-strand break repair through the microhomology-mediated alternative-end-joining (Alt-EJ) pathway. Acts as a protease: mediates autocatalytic processing of its N-terminal methionine in order to expose the catalytic cysteine (By similarity).</text>
</comment>
<comment type="activity regulation">
    <text evidence="3">Formation and reversal of DNA-protein cross-link depends on DNA context. Catalyzes formation of the thiazolidine linkage in presence of abasic sites in single-stranded DNA. Mediates the reversal of the thiazolidine cross-link in presence of double stranded DNA.</text>
</comment>
<comment type="subunit">
    <text evidence="3">Interacts (via PIP-box motif) with PCNA.</text>
</comment>
<comment type="subcellular location">
    <subcellularLocation>
        <location evidence="3">Chromosome</location>
    </subcellularLocation>
    <text evidence="3">Recruited to chromatin following DNA damage. Localizes to replication forks.</text>
</comment>
<comment type="domain">
    <text evidence="1 3">The N-terminal catalytic Cys-2 residue forms a thiazolidine linkage to a ring-opened DNA abasic site. Glu-127 catalyzes reversal of the thiazolidine linkage; self-reversal is favoured by duplex DNA formation (By similarity). Glu-127 is also involved in sensing abasic sites in single-stranded DNA (ssDNA). His-209 stabilizes the abasic sites by forming a hydrogen bond with the O4' hydroxyl group (By similarity).</text>
</comment>
<comment type="PTM">
    <text evidence="3">Ubiquitinated; the covalent HMCES DNA-protein cross-link is ubiquitinated, leading to its degradation by the proteasome.</text>
</comment>
<comment type="similarity">
    <text evidence="5">Belongs to the SOS response-associated peptidase family.</text>
</comment>
<proteinExistence type="evidence at transcript level"/>
<dbReference type="EC" id="4.-.-.-" evidence="3"/>
<dbReference type="EC" id="3.4.-.-" evidence="2"/>
<dbReference type="EMBL" id="BC083690">
    <property type="protein sequence ID" value="AAH83690.1"/>
    <property type="molecule type" value="mRNA"/>
</dbReference>
<dbReference type="RefSeq" id="NP_001020218.1">
    <property type="nucleotide sequence ID" value="NM_001025047.2"/>
</dbReference>
<dbReference type="RefSeq" id="XP_006236913.1">
    <property type="nucleotide sequence ID" value="XM_006236851.5"/>
</dbReference>
<dbReference type="SMR" id="Q5XIJ1"/>
<dbReference type="FunCoup" id="Q5XIJ1">
    <property type="interactions" value="1437"/>
</dbReference>
<dbReference type="PhosphoSitePlus" id="Q5XIJ1"/>
<dbReference type="PaxDb" id="10116-ENSRNOP00000054105"/>
<dbReference type="Ensembl" id="ENSRNOT00000057286.4">
    <property type="protein sequence ID" value="ENSRNOP00000054105.3"/>
    <property type="gene ID" value="ENSRNOG00000010474.8"/>
</dbReference>
<dbReference type="GeneID" id="500251"/>
<dbReference type="KEGG" id="rno:500251"/>
<dbReference type="UCSC" id="RGD:1559800">
    <property type="organism name" value="rat"/>
</dbReference>
<dbReference type="AGR" id="RGD:1559800"/>
<dbReference type="CTD" id="56941"/>
<dbReference type="RGD" id="1559800">
    <property type="gene designation" value="Hmces"/>
</dbReference>
<dbReference type="eggNOG" id="KOG2618">
    <property type="taxonomic scope" value="Eukaryota"/>
</dbReference>
<dbReference type="GeneTree" id="ENSGT00390000016313"/>
<dbReference type="HOGENOM" id="CLU_035990_1_0_1"/>
<dbReference type="InParanoid" id="Q5XIJ1"/>
<dbReference type="OrthoDB" id="2111841at2759"/>
<dbReference type="PhylomeDB" id="Q5XIJ1"/>
<dbReference type="PRO" id="PR:Q5XIJ1"/>
<dbReference type="Proteomes" id="UP000002494">
    <property type="component" value="Chromosome 4"/>
</dbReference>
<dbReference type="Bgee" id="ENSRNOG00000010474">
    <property type="expression patterns" value="Expressed in cerebellum and 19 other cell types or tissues"/>
</dbReference>
<dbReference type="ExpressionAtlas" id="Q5XIJ1">
    <property type="expression patterns" value="baseline and differential"/>
</dbReference>
<dbReference type="GO" id="GO:0005657">
    <property type="term" value="C:replication fork"/>
    <property type="evidence" value="ECO:0000250"/>
    <property type="project" value="UniProtKB"/>
</dbReference>
<dbReference type="GO" id="GO:0140431">
    <property type="term" value="F:DNA-(abasic site) binding"/>
    <property type="evidence" value="ECO:0000266"/>
    <property type="project" value="RGD"/>
</dbReference>
<dbReference type="GO" id="GO:0008233">
    <property type="term" value="F:peptidase activity"/>
    <property type="evidence" value="ECO:0007669"/>
    <property type="project" value="UniProtKB-KW"/>
</dbReference>
<dbReference type="GO" id="GO:0160129">
    <property type="term" value="F:protein-DNA covalent cross-linking activity"/>
    <property type="evidence" value="ECO:0000250"/>
    <property type="project" value="UniProtKB"/>
</dbReference>
<dbReference type="GO" id="GO:0003697">
    <property type="term" value="F:single-stranded DNA binding"/>
    <property type="evidence" value="ECO:0000250"/>
    <property type="project" value="UniProtKB"/>
</dbReference>
<dbReference type="GO" id="GO:0006974">
    <property type="term" value="P:DNA damage response"/>
    <property type="evidence" value="ECO:0000250"/>
    <property type="project" value="UniProtKB"/>
</dbReference>
<dbReference type="GO" id="GO:0097681">
    <property type="term" value="P:double-strand break repair via alternative nonhomologous end joining"/>
    <property type="evidence" value="ECO:0000266"/>
    <property type="project" value="RGD"/>
</dbReference>
<dbReference type="GO" id="GO:0036297">
    <property type="term" value="P:interstrand cross-link repair"/>
    <property type="evidence" value="ECO:0000250"/>
    <property type="project" value="UniProtKB"/>
</dbReference>
<dbReference type="GO" id="GO:0045830">
    <property type="term" value="P:positive regulation of isotype switching"/>
    <property type="evidence" value="ECO:0000250"/>
    <property type="project" value="UniProtKB"/>
</dbReference>
<dbReference type="GO" id="GO:0106300">
    <property type="term" value="P:protein-DNA covalent cross-linking repair"/>
    <property type="evidence" value="ECO:0000250"/>
    <property type="project" value="UniProtKB"/>
</dbReference>
<dbReference type="GO" id="GO:0006508">
    <property type="term" value="P:proteolysis"/>
    <property type="evidence" value="ECO:0007669"/>
    <property type="project" value="UniProtKB-KW"/>
</dbReference>
<dbReference type="GO" id="GO:0016446">
    <property type="term" value="P:somatic hypermutation of immunoglobulin genes"/>
    <property type="evidence" value="ECO:0000250"/>
    <property type="project" value="UniProtKB"/>
</dbReference>
<dbReference type="FunFam" id="3.90.1680.10:FF:000001">
    <property type="entry name" value="Abasic site processing protein HMCES"/>
    <property type="match status" value="1"/>
</dbReference>
<dbReference type="Gene3D" id="3.90.1680.10">
    <property type="entry name" value="SOS response associated peptidase-like"/>
    <property type="match status" value="1"/>
</dbReference>
<dbReference type="InterPro" id="IPR003738">
    <property type="entry name" value="SRAP"/>
</dbReference>
<dbReference type="InterPro" id="IPR036590">
    <property type="entry name" value="SRAP-like"/>
</dbReference>
<dbReference type="PANTHER" id="PTHR13604:SF0">
    <property type="entry name" value="ABASIC SITE PROCESSING PROTEIN HMCES"/>
    <property type="match status" value="1"/>
</dbReference>
<dbReference type="PANTHER" id="PTHR13604">
    <property type="entry name" value="DC12-RELATED"/>
    <property type="match status" value="1"/>
</dbReference>
<dbReference type="Pfam" id="PF02586">
    <property type="entry name" value="SRAP"/>
    <property type="match status" value="1"/>
</dbReference>
<dbReference type="SUPFAM" id="SSF143081">
    <property type="entry name" value="BB1717-like"/>
    <property type="match status" value="1"/>
</dbReference>
<organism>
    <name type="scientific">Rattus norvegicus</name>
    <name type="common">Rat</name>
    <dbReference type="NCBI Taxonomy" id="10116"/>
    <lineage>
        <taxon>Eukaryota</taxon>
        <taxon>Metazoa</taxon>
        <taxon>Chordata</taxon>
        <taxon>Craniata</taxon>
        <taxon>Vertebrata</taxon>
        <taxon>Euteleostomi</taxon>
        <taxon>Mammalia</taxon>
        <taxon>Eutheria</taxon>
        <taxon>Euarchontoglires</taxon>
        <taxon>Glires</taxon>
        <taxon>Rodentia</taxon>
        <taxon>Myomorpha</taxon>
        <taxon>Muroidea</taxon>
        <taxon>Muridae</taxon>
        <taxon>Murinae</taxon>
        <taxon>Rattus</taxon>
    </lineage>
</organism>
<sequence length="353" mass="40222">MCGRTSCHLPRDALTRACAYLDRQGRRQLPQWRDPDKYCPSYNKSPQSSSPVLLSRLHFEKDADSSDRIIFPMRWGLVPSWFKESDPSKLQFNTSNCRSDTIMEKQSFKAPLGKGRRCVVLADGFYEWQRCQGTNQRQPYFIYFPQSKTEKSGENSGSDSLNNKEEVWDNWRLLTMAGIFDCWEPPKGERLYSYSIITVDSCRGLSDIHSRMPAILDGEEAVSKWLDFGEVSTQEALKLIHPIDNITFHPVSPVVNNSRNNTPECLAPADLLVKKEPKASGSSQRMMQWLATKSPKKEVPDSPKKDASGLPQWSSQFLQKSPLPTKRGASSSLLDRWLKQEKEDEPVAKRPNS</sequence>
<accession>Q5XIJ1</accession>
<gene>
    <name evidence="6" type="primary">Hmces</name>
    <name evidence="3" type="synonym">Srapd1</name>
</gene>
<protein>
    <recommendedName>
        <fullName evidence="5">Abasic site processing protein HMCES</fullName>
        <ecNumber evidence="3">4.-.-.-</ecNumber>
    </recommendedName>
    <alternativeName>
        <fullName>Embryonic stem cell-specific 5-hydroxymethylcytosine-binding protein</fullName>
        <shortName evidence="3">ES cell-specific 5hmC-binding protein</shortName>
    </alternativeName>
    <alternativeName>
        <fullName evidence="2">Peptidase HMCES</fullName>
        <ecNumber evidence="2">3.4.-.-</ecNumber>
    </alternativeName>
    <alternativeName>
        <fullName evidence="3">SRAP domain-containing protein 1</fullName>
    </alternativeName>
</protein>
<keyword id="KW-0068">Autocatalytic cleavage</keyword>
<keyword id="KW-0158">Chromosome</keyword>
<keyword id="KW-0190">Covalent protein-DNA linkage</keyword>
<keyword id="KW-0227">DNA damage</keyword>
<keyword id="KW-0238">DNA-binding</keyword>
<keyword id="KW-0378">Hydrolase</keyword>
<keyword id="KW-1017">Isopeptide bond</keyword>
<keyword id="KW-0456">Lyase</keyword>
<keyword id="KW-0597">Phosphoprotein</keyword>
<keyword id="KW-0645">Protease</keyword>
<keyword id="KW-1185">Reference proteome</keyword>
<keyword id="KW-0832">Ubl conjugation</keyword>
<name>HMCES_RAT</name>
<evidence type="ECO:0000250" key="1">
    <source>
        <dbReference type="UniProtKB" id="P76318"/>
    </source>
</evidence>
<evidence type="ECO:0000250" key="2">
    <source>
        <dbReference type="UniProtKB" id="Q8R1M0"/>
    </source>
</evidence>
<evidence type="ECO:0000250" key="3">
    <source>
        <dbReference type="UniProtKB" id="Q96FZ2"/>
    </source>
</evidence>
<evidence type="ECO:0000256" key="4">
    <source>
        <dbReference type="SAM" id="MobiDB-lite"/>
    </source>
</evidence>
<evidence type="ECO:0000305" key="5"/>
<evidence type="ECO:0000312" key="6">
    <source>
        <dbReference type="RGD" id="1559800"/>
    </source>
</evidence>
<feature type="initiator methionine" description="Removed" evidence="2">
    <location>
        <position position="1"/>
    </location>
</feature>
<feature type="chain" id="PRO_0000164397" description="Abasic site processing protein HMCES">
    <location>
        <begin position="2"/>
        <end position="353"/>
    </location>
</feature>
<feature type="region of interest" description="Disordered" evidence="4">
    <location>
        <begin position="292"/>
        <end position="353"/>
    </location>
</feature>
<feature type="short sequence motif" description="PIP-box" evidence="3">
    <location>
        <begin position="332"/>
        <end position="338"/>
    </location>
</feature>
<feature type="compositionally biased region" description="Basic and acidic residues" evidence="4">
    <location>
        <begin position="295"/>
        <end position="307"/>
    </location>
</feature>
<feature type="compositionally biased region" description="Basic and acidic residues" evidence="4">
    <location>
        <begin position="336"/>
        <end position="353"/>
    </location>
</feature>
<feature type="active site" description="Nucleophile" evidence="3">
    <location>
        <position position="2"/>
    </location>
</feature>
<feature type="active site" evidence="3">
    <location>
        <position position="127"/>
    </location>
</feature>
<feature type="site" description="Required for sensing abasic sites" evidence="1">
    <location>
        <position position="127"/>
    </location>
</feature>
<feature type="site" description="Required to stabilize abasic sites" evidence="1">
    <location>
        <position position="209"/>
    </location>
</feature>
<feature type="modified residue" description="Thiazolidine linkage to a ring-opened DNA abasic site" evidence="3">
    <location>
        <position position="2"/>
    </location>
</feature>
<feature type="modified residue" description="Phosphoserine" evidence="3">
    <location>
        <position position="160"/>
    </location>
</feature>
<feature type="modified residue" description="Phosphoserine" evidence="3">
    <location>
        <position position="294"/>
    </location>
</feature>
<feature type="modified residue" description="Phosphoserine" evidence="3">
    <location>
        <position position="321"/>
    </location>
</feature>
<feature type="cross-link" description="Glycyl lysine isopeptide (Lys-Gly) (interchain with G-Cter in SUMO2)" evidence="3">
    <location>
        <position position="148"/>
    </location>
</feature>
<feature type="cross-link" description="Glycyl lysine isopeptide (Lys-Gly) (interchain with G-Cter in SUMO2)" evidence="3">
    <location>
        <position position="151"/>
    </location>
</feature>
<feature type="cross-link" description="Glycyl lysine isopeptide (Lys-Gly) (interchain with G-Cter in SUMO2)" evidence="3">
    <location>
        <position position="274"/>
    </location>
</feature>
<feature type="cross-link" description="Glycyl lysine isopeptide (Lys-Gly) (interchain with G-Cter in SUMO2)" evidence="3">
    <location>
        <position position="275"/>
    </location>
</feature>
<feature type="cross-link" description="Glycyl lysine isopeptide (Lys-Gly) (interchain with G-Cter in SUMO2)" evidence="3">
    <location>
        <position position="305"/>
    </location>
</feature>
<feature type="cross-link" description="Glycyl lysine isopeptide (Lys-Gly) (interchain with G-Cter in SUMO2)" evidence="3">
    <location>
        <position position="339"/>
    </location>
</feature>
<feature type="cross-link" description="Glycyl lysine isopeptide (Lys-Gly) (interchain with G-Cter in SUMO2)" evidence="3">
    <location>
        <position position="342"/>
    </location>
</feature>
<reference key="1">
    <citation type="journal article" date="2004" name="Genome Res.">
        <title>The status, quality, and expansion of the NIH full-length cDNA project: the Mammalian Gene Collection (MGC).</title>
        <authorList>
            <consortium name="The MGC Project Team"/>
        </authorList>
    </citation>
    <scope>NUCLEOTIDE SEQUENCE [LARGE SCALE MRNA]</scope>
    <source>
        <tissue>Heart</tissue>
    </source>
</reference>